<keyword id="KW-0249">Electron transport</keyword>
<keyword id="KW-0349">Heme</keyword>
<keyword id="KW-0408">Iron</keyword>
<keyword id="KW-0472">Membrane</keyword>
<keyword id="KW-0479">Metal-binding</keyword>
<keyword id="KW-0496">Mitochondrion</keyword>
<keyword id="KW-0999">Mitochondrion inner membrane</keyword>
<keyword id="KW-0679">Respiratory chain</keyword>
<keyword id="KW-0812">Transmembrane</keyword>
<keyword id="KW-1133">Transmembrane helix</keyword>
<keyword id="KW-0813">Transport</keyword>
<keyword id="KW-0830">Ubiquinone</keyword>
<protein>
    <recommendedName>
        <fullName>Cytochrome b</fullName>
    </recommendedName>
    <alternativeName>
        <fullName>Complex III subunit 3</fullName>
    </alternativeName>
    <alternativeName>
        <fullName>Complex III subunit III</fullName>
    </alternativeName>
    <alternativeName>
        <fullName>Cytochrome b-c1 complex subunit 3</fullName>
    </alternativeName>
    <alternativeName>
        <fullName>Ubiquinol-cytochrome-c reductase complex cytochrome b subunit</fullName>
    </alternativeName>
</protein>
<geneLocation type="mitochondrion"/>
<comment type="function">
    <text evidence="2">Component of the ubiquinol-cytochrome c reductase complex (complex III or cytochrome b-c1 complex) that is part of the mitochondrial respiratory chain. The b-c1 complex mediates electron transfer from ubiquinol to cytochrome c. Contributes to the generation of a proton gradient across the mitochondrial membrane that is then used for ATP synthesis.</text>
</comment>
<comment type="cofactor">
    <cofactor evidence="2">
        <name>heme b</name>
        <dbReference type="ChEBI" id="CHEBI:60344"/>
    </cofactor>
    <text evidence="2">Binds 2 heme b groups non-covalently.</text>
</comment>
<comment type="subunit">
    <text evidence="2">The cytochrome bc1 complex contains 11 subunits: 3 respiratory subunits (MT-CYB, CYC1 and UQCRFS1), 2 core proteins (UQCRC1 and UQCRC2) and 6 low-molecular weight proteins (UQCRH/QCR6, UQCRB/QCR7, UQCRQ/QCR8, UQCR10/QCR9, UQCR11/QCR10 and a cleavage product of UQCRFS1). This cytochrome bc1 complex then forms a dimer.</text>
</comment>
<comment type="subcellular location">
    <subcellularLocation>
        <location evidence="2">Mitochondrion inner membrane</location>
        <topology evidence="2">Multi-pass membrane protein</topology>
    </subcellularLocation>
</comment>
<comment type="miscellaneous">
    <text evidence="1">Heme 1 (or BL or b562) is low-potential and absorbs at about 562 nm, and heme 2 (or BH or b566) is high-potential and absorbs at about 566 nm.</text>
</comment>
<comment type="similarity">
    <text evidence="3 4">Belongs to the cytochrome b family.</text>
</comment>
<comment type="caution">
    <text evidence="2">The full-length protein contains only eight transmembrane helices, not nine as predicted by bioinformatics tools.</text>
</comment>
<evidence type="ECO:0000250" key="1"/>
<evidence type="ECO:0000250" key="2">
    <source>
        <dbReference type="UniProtKB" id="P00157"/>
    </source>
</evidence>
<evidence type="ECO:0000255" key="3">
    <source>
        <dbReference type="PROSITE-ProRule" id="PRU00967"/>
    </source>
</evidence>
<evidence type="ECO:0000255" key="4">
    <source>
        <dbReference type="PROSITE-ProRule" id="PRU00968"/>
    </source>
</evidence>
<evidence type="ECO:0000305" key="5"/>
<dbReference type="EMBL" id="AY014956">
    <property type="protein sequence ID" value="AAG40515.1"/>
    <property type="molecule type" value="Genomic_DNA"/>
</dbReference>
<dbReference type="EMBL" id="AJ000463">
    <property type="protein sequence ID" value="CAA04106.1"/>
    <property type="molecule type" value="Genomic_DNA"/>
</dbReference>
<dbReference type="EMBL" id="AJ000464">
    <property type="protein sequence ID" value="CAA04107.1"/>
    <property type="molecule type" value="Genomic_DNA"/>
</dbReference>
<dbReference type="SMR" id="O79465"/>
<dbReference type="GO" id="GO:0005743">
    <property type="term" value="C:mitochondrial inner membrane"/>
    <property type="evidence" value="ECO:0007669"/>
    <property type="project" value="UniProtKB-SubCell"/>
</dbReference>
<dbReference type="GO" id="GO:0045275">
    <property type="term" value="C:respiratory chain complex III"/>
    <property type="evidence" value="ECO:0007669"/>
    <property type="project" value="InterPro"/>
</dbReference>
<dbReference type="GO" id="GO:0046872">
    <property type="term" value="F:metal ion binding"/>
    <property type="evidence" value="ECO:0007669"/>
    <property type="project" value="UniProtKB-KW"/>
</dbReference>
<dbReference type="GO" id="GO:0008121">
    <property type="term" value="F:ubiquinol-cytochrome-c reductase activity"/>
    <property type="evidence" value="ECO:0007669"/>
    <property type="project" value="InterPro"/>
</dbReference>
<dbReference type="GO" id="GO:0006122">
    <property type="term" value="P:mitochondrial electron transport, ubiquinol to cytochrome c"/>
    <property type="evidence" value="ECO:0007669"/>
    <property type="project" value="TreeGrafter"/>
</dbReference>
<dbReference type="CDD" id="cd00290">
    <property type="entry name" value="cytochrome_b_C"/>
    <property type="match status" value="1"/>
</dbReference>
<dbReference type="CDD" id="cd00284">
    <property type="entry name" value="Cytochrome_b_N"/>
    <property type="match status" value="1"/>
</dbReference>
<dbReference type="FunFam" id="1.20.810.10:FF:000002">
    <property type="entry name" value="Cytochrome b"/>
    <property type="match status" value="1"/>
</dbReference>
<dbReference type="Gene3D" id="1.20.810.10">
    <property type="entry name" value="Cytochrome Bc1 Complex, Chain C"/>
    <property type="match status" value="1"/>
</dbReference>
<dbReference type="InterPro" id="IPR005798">
    <property type="entry name" value="Cyt_b/b6_C"/>
</dbReference>
<dbReference type="InterPro" id="IPR036150">
    <property type="entry name" value="Cyt_b/b6_C_sf"/>
</dbReference>
<dbReference type="InterPro" id="IPR005797">
    <property type="entry name" value="Cyt_b/b6_N"/>
</dbReference>
<dbReference type="InterPro" id="IPR027387">
    <property type="entry name" value="Cytb/b6-like_sf"/>
</dbReference>
<dbReference type="InterPro" id="IPR030689">
    <property type="entry name" value="Cytochrome_b"/>
</dbReference>
<dbReference type="InterPro" id="IPR048260">
    <property type="entry name" value="Cytochrome_b_C_euk/bac"/>
</dbReference>
<dbReference type="InterPro" id="IPR048259">
    <property type="entry name" value="Cytochrome_b_N_euk/bac"/>
</dbReference>
<dbReference type="InterPro" id="IPR016174">
    <property type="entry name" value="Di-haem_cyt_TM"/>
</dbReference>
<dbReference type="PANTHER" id="PTHR19271">
    <property type="entry name" value="CYTOCHROME B"/>
    <property type="match status" value="1"/>
</dbReference>
<dbReference type="PANTHER" id="PTHR19271:SF16">
    <property type="entry name" value="CYTOCHROME B"/>
    <property type="match status" value="1"/>
</dbReference>
<dbReference type="Pfam" id="PF00032">
    <property type="entry name" value="Cytochrom_B_C"/>
    <property type="match status" value="1"/>
</dbReference>
<dbReference type="Pfam" id="PF00033">
    <property type="entry name" value="Cytochrome_B"/>
    <property type="match status" value="1"/>
</dbReference>
<dbReference type="PIRSF" id="PIRSF038885">
    <property type="entry name" value="COB"/>
    <property type="match status" value="1"/>
</dbReference>
<dbReference type="SUPFAM" id="SSF81648">
    <property type="entry name" value="a domain/subunit of cytochrome bc1 complex (Ubiquinol-cytochrome c reductase)"/>
    <property type="match status" value="1"/>
</dbReference>
<dbReference type="SUPFAM" id="SSF81342">
    <property type="entry name" value="Transmembrane di-heme cytochromes"/>
    <property type="match status" value="1"/>
</dbReference>
<dbReference type="PROSITE" id="PS51003">
    <property type="entry name" value="CYTB_CTER"/>
    <property type="match status" value="1"/>
</dbReference>
<dbReference type="PROSITE" id="PS51002">
    <property type="entry name" value="CYTB_NTER"/>
    <property type="match status" value="1"/>
</dbReference>
<gene>
    <name type="primary">MT-CYB</name>
    <name type="synonym">COB</name>
    <name type="synonym">CYTB</name>
    <name type="synonym">MTCYB</name>
</gene>
<reference key="1">
    <citation type="journal article" date="2003" name="J. Mammal.">
        <title>Phylogenetic diversification within the Sorex cinereus group (Soricidae).</title>
        <authorList>
            <person name="Demboski J.R."/>
            <person name="Cook J.A."/>
        </authorList>
    </citation>
    <scope>NUCLEOTIDE SEQUENCE [GENOMIC DNA]</scope>
    <source>
        <strain>Isolate AFTC 14146</strain>
    </source>
</reference>
<reference key="2">
    <citation type="journal article" date="1999" name="Mol. Phylogenet. Evol.">
        <title>Molecular phylogeny and evolution of Sorex shrews (Soricidae: Insectivora) inferred from mitochondrial DNA sequence data.</title>
        <authorList>
            <person name="Fumagalli L."/>
            <person name="Taberlet P."/>
            <person name="Stewart D.T."/>
            <person name="Gielly L."/>
            <person name="Hausser J."/>
            <person name="Vogel P."/>
        </authorList>
    </citation>
    <scope>NUCLEOTIDE SEQUENCE [GENOMIC DNA] OF 44-379</scope>
    <scope>VARIANTS</scope>
</reference>
<accession>O79465</accession>
<accession>O79466</accession>
<accession>Q8SFK4</accession>
<name>CYB_SORTR</name>
<sequence length="379" mass="42657">MTNLRKTHPLMKIVNSSFIDLPTPSNISSWWNFGSLLGICLIVQILTGLFLAMHYTSDTLTAFSSVTHICRDVNYGWLIRYMHANGASMFFICLFMHVGRGIYYGSYMFLETWNIGVLLLFAVMATAFMGYVLPWGQMSFWGATVITNLLSAIPYIGTDLVEWIWGGFSVDKATLTRFFAFHFILPFIVAALAGVHLLFLHETGSNNPSGLSSDADKIPFHPYYTIKDILGVLLFILVLTSLVLFSPDLLGDPDNYTPANPLNTPPHIKPEWYFLFAYAILRSIPNKLGGVLALVLSILVLAVIPFLHTSKQRSMMFRPLSQCLFWILVADLLTLTWIGGQPVEHPFIIIGQLASILYFLLILVLMPITSLFENNLLKW</sequence>
<feature type="chain" id="PRO_0000061583" description="Cytochrome b">
    <location>
        <begin position="1"/>
        <end position="379"/>
    </location>
</feature>
<feature type="transmembrane region" description="Helical" evidence="2">
    <location>
        <begin position="33"/>
        <end position="53"/>
    </location>
</feature>
<feature type="transmembrane region" description="Helical" evidence="2">
    <location>
        <begin position="77"/>
        <end position="98"/>
    </location>
</feature>
<feature type="transmembrane region" description="Helical" evidence="2">
    <location>
        <begin position="113"/>
        <end position="133"/>
    </location>
</feature>
<feature type="transmembrane region" description="Helical" evidence="2">
    <location>
        <begin position="178"/>
        <end position="198"/>
    </location>
</feature>
<feature type="transmembrane region" description="Helical" evidence="2">
    <location>
        <begin position="226"/>
        <end position="246"/>
    </location>
</feature>
<feature type="transmembrane region" description="Helical" evidence="2">
    <location>
        <begin position="288"/>
        <end position="308"/>
    </location>
</feature>
<feature type="transmembrane region" description="Helical" evidence="2">
    <location>
        <begin position="320"/>
        <end position="340"/>
    </location>
</feature>
<feature type="transmembrane region" description="Helical" evidence="2">
    <location>
        <begin position="347"/>
        <end position="367"/>
    </location>
</feature>
<feature type="binding site" description="axial binding residue" evidence="2">
    <location>
        <position position="83"/>
    </location>
    <ligand>
        <name>heme b</name>
        <dbReference type="ChEBI" id="CHEBI:60344"/>
        <label>b562</label>
    </ligand>
    <ligandPart>
        <name>Fe</name>
        <dbReference type="ChEBI" id="CHEBI:18248"/>
    </ligandPart>
</feature>
<feature type="binding site" description="axial binding residue" evidence="2">
    <location>
        <position position="97"/>
    </location>
    <ligand>
        <name>heme b</name>
        <dbReference type="ChEBI" id="CHEBI:60344"/>
        <label>b566</label>
    </ligand>
    <ligandPart>
        <name>Fe</name>
        <dbReference type="ChEBI" id="CHEBI:18248"/>
    </ligandPart>
</feature>
<feature type="binding site" description="axial binding residue" evidence="2">
    <location>
        <position position="182"/>
    </location>
    <ligand>
        <name>heme b</name>
        <dbReference type="ChEBI" id="CHEBI:60344"/>
        <label>b562</label>
    </ligand>
    <ligandPart>
        <name>Fe</name>
        <dbReference type="ChEBI" id="CHEBI:18248"/>
    </ligandPart>
</feature>
<feature type="binding site" description="axial binding residue" evidence="2">
    <location>
        <position position="196"/>
    </location>
    <ligand>
        <name>heme b</name>
        <dbReference type="ChEBI" id="CHEBI:60344"/>
        <label>b566</label>
    </ligand>
    <ligandPart>
        <name>Fe</name>
        <dbReference type="ChEBI" id="CHEBI:18248"/>
    </ligandPart>
</feature>
<feature type="binding site" evidence="2">
    <location>
        <position position="201"/>
    </location>
    <ligand>
        <name>a ubiquinone</name>
        <dbReference type="ChEBI" id="CHEBI:16389"/>
    </ligand>
</feature>
<feature type="sequence variant">
    <original>L</original>
    <variation>H</variation>
    <location>
        <position position="262"/>
    </location>
</feature>
<feature type="sequence variant">
    <original>F</original>
    <variation>L</variation>
    <location>
        <position position="276"/>
    </location>
</feature>
<feature type="sequence variant">
    <original>L</original>
    <variation>M</variation>
    <location>
        <position position="292"/>
    </location>
</feature>
<feature type="sequence variant">
    <original>I</original>
    <variation>T</variation>
    <location>
        <position position="348"/>
    </location>
</feature>
<feature type="sequence variant">
    <original>L</original>
    <variation>M</variation>
    <location>
        <position position="353"/>
    </location>
</feature>
<feature type="sequence conflict" description="In Ref. 2; CAA04106/CAA04107." evidence="5" ref="2">
    <original>V</original>
    <variation>I</variation>
    <location>
        <position position="189"/>
    </location>
</feature>
<organism>
    <name type="scientific">Sorex trowbridgii</name>
    <name type="common">Trowbridge's shrew</name>
    <dbReference type="NCBI Taxonomy" id="62906"/>
    <lineage>
        <taxon>Eukaryota</taxon>
        <taxon>Metazoa</taxon>
        <taxon>Chordata</taxon>
        <taxon>Craniata</taxon>
        <taxon>Vertebrata</taxon>
        <taxon>Euteleostomi</taxon>
        <taxon>Mammalia</taxon>
        <taxon>Eutheria</taxon>
        <taxon>Laurasiatheria</taxon>
        <taxon>Eulipotyphla</taxon>
        <taxon>Soricidae</taxon>
        <taxon>Soricinae</taxon>
        <taxon>Sorex</taxon>
    </lineage>
</organism>
<proteinExistence type="inferred from homology"/>